<organism>
    <name type="scientific">Mycobacterium leprae (strain TN)</name>
    <dbReference type="NCBI Taxonomy" id="272631"/>
    <lineage>
        <taxon>Bacteria</taxon>
        <taxon>Bacillati</taxon>
        <taxon>Actinomycetota</taxon>
        <taxon>Actinomycetes</taxon>
        <taxon>Mycobacteriales</taxon>
        <taxon>Mycobacteriaceae</taxon>
        <taxon>Mycobacterium</taxon>
    </lineage>
</organism>
<evidence type="ECO:0000250" key="1">
    <source>
        <dbReference type="UniProtKB" id="P9WQD9"/>
    </source>
</evidence>
<evidence type="ECO:0000255" key="2">
    <source>
        <dbReference type="PROSITE-ProRule" id="PRU01348"/>
    </source>
</evidence>
<evidence type="ECO:0000305" key="3"/>
<accession>Q9CBS7</accession>
<accession>O69474</accession>
<comment type="function">
    <text evidence="1">Part of the mycobacterial fatty acid elongation system FAS-II, which is involved in mycolic acid biosynthesis. Catalyzes the elongation of long chain acyl-ACP substrates by the addition of two carbons from malonyl-ACP to an acyl acceptor. Involved in the initial extension of the mycolate chain and forms monounsaturated fatty acids that averaged 40 carbons in length.</text>
</comment>
<comment type="catalytic activity">
    <reaction evidence="1">
        <text>an ultra-long-chain mono-unsaturated fatty acyl-[ACP] + malonyl-[ACP] + H(+) = a 3-oxo-ultra-long-chain mono-unsaturated fatty acyl-[ACP] + holo-[ACP] + CO2</text>
        <dbReference type="Rhea" id="RHEA:65312"/>
        <dbReference type="Rhea" id="RHEA-COMP:9623"/>
        <dbReference type="Rhea" id="RHEA-COMP:9685"/>
        <dbReference type="Rhea" id="RHEA-COMP:16765"/>
        <dbReference type="Rhea" id="RHEA-COMP:16775"/>
        <dbReference type="ChEBI" id="CHEBI:15378"/>
        <dbReference type="ChEBI" id="CHEBI:16526"/>
        <dbReference type="ChEBI" id="CHEBI:64479"/>
        <dbReference type="ChEBI" id="CHEBI:78449"/>
        <dbReference type="ChEBI" id="CHEBI:156399"/>
        <dbReference type="ChEBI" id="CHEBI:156400"/>
        <dbReference type="EC" id="2.3.1.293"/>
    </reaction>
    <physiologicalReaction direction="left-to-right" evidence="1">
        <dbReference type="Rhea" id="RHEA:65313"/>
    </physiologicalReaction>
</comment>
<comment type="pathway">
    <text evidence="1">Lipid metabolism; mycolic acid biosynthesis.</text>
</comment>
<comment type="subcellular location">
    <subcellularLocation>
        <location evidence="1">Cytoplasm</location>
    </subcellularLocation>
</comment>
<comment type="similarity">
    <text evidence="3">Belongs to the thiolase-like superfamily. Beta-ketoacyl-ACP synthases family.</text>
</comment>
<comment type="sequence caution" evidence="3">
    <conflict type="erroneous initiation">
        <sequence resource="EMBL-CDS" id="CAA19201"/>
    </conflict>
</comment>
<protein>
    <recommendedName>
        <fullName>3-oxoacyl-[acyl-carrier-protein] synthase 1</fullName>
        <ecNumber evidence="1">2.3.1.293</ecNumber>
    </recommendedName>
    <alternativeName>
        <fullName>Beta-ketoacyl-ACP synthase 1</fullName>
        <shortName>KAS 1</shortName>
    </alternativeName>
</protein>
<dbReference type="EC" id="2.3.1.293" evidence="1"/>
<dbReference type="EMBL" id="AL023635">
    <property type="protein sequence ID" value="CAA19201.1"/>
    <property type="status" value="ALT_INIT"/>
    <property type="molecule type" value="Genomic_DNA"/>
</dbReference>
<dbReference type="EMBL" id="AL583922">
    <property type="protein sequence ID" value="CAC30606.1"/>
    <property type="molecule type" value="Genomic_DNA"/>
</dbReference>
<dbReference type="PIR" id="A87116">
    <property type="entry name" value="A87116"/>
</dbReference>
<dbReference type="PIR" id="T44711">
    <property type="entry name" value="T44711"/>
</dbReference>
<dbReference type="RefSeq" id="NP_302136.1">
    <property type="nucleotide sequence ID" value="NC_002677.1"/>
</dbReference>
<dbReference type="RefSeq" id="WP_010908457.1">
    <property type="nucleotide sequence ID" value="NC_002677.1"/>
</dbReference>
<dbReference type="SMR" id="Q9CBS7"/>
<dbReference type="STRING" id="272631.gene:17575498"/>
<dbReference type="KEGG" id="mle:ML1655"/>
<dbReference type="PATRIC" id="fig|272631.5.peg.3122"/>
<dbReference type="Leproma" id="ML1655"/>
<dbReference type="eggNOG" id="COG0304">
    <property type="taxonomic scope" value="Bacteria"/>
</dbReference>
<dbReference type="HOGENOM" id="CLU_000022_69_2_11"/>
<dbReference type="OrthoDB" id="9808669at2"/>
<dbReference type="UniPathway" id="UPA00915"/>
<dbReference type="Proteomes" id="UP000000806">
    <property type="component" value="Chromosome"/>
</dbReference>
<dbReference type="GO" id="GO:0005829">
    <property type="term" value="C:cytosol"/>
    <property type="evidence" value="ECO:0007669"/>
    <property type="project" value="TreeGrafter"/>
</dbReference>
<dbReference type="GO" id="GO:0004315">
    <property type="term" value="F:3-oxoacyl-[acyl-carrier-protein] synthase activity"/>
    <property type="evidence" value="ECO:0007669"/>
    <property type="project" value="TreeGrafter"/>
</dbReference>
<dbReference type="GO" id="GO:0006633">
    <property type="term" value="P:fatty acid biosynthetic process"/>
    <property type="evidence" value="ECO:0007669"/>
    <property type="project" value="UniProtKB-KW"/>
</dbReference>
<dbReference type="CDD" id="cd00834">
    <property type="entry name" value="KAS_I_II"/>
    <property type="match status" value="1"/>
</dbReference>
<dbReference type="FunFam" id="3.40.47.10:FF:000029">
    <property type="entry name" value="3-oxoacyl-[acyl-carrier-protein] synthase 1"/>
    <property type="match status" value="1"/>
</dbReference>
<dbReference type="FunFam" id="3.40.47.10:FF:000018">
    <property type="entry name" value="3-oxoacyl-[acyl-carrier-protein] synthase 2"/>
    <property type="match status" value="1"/>
</dbReference>
<dbReference type="Gene3D" id="3.40.47.10">
    <property type="match status" value="2"/>
</dbReference>
<dbReference type="InterPro" id="IPR000794">
    <property type="entry name" value="Beta-ketoacyl_synthase"/>
</dbReference>
<dbReference type="InterPro" id="IPR014031">
    <property type="entry name" value="Ketoacyl_synth_C"/>
</dbReference>
<dbReference type="InterPro" id="IPR014030">
    <property type="entry name" value="Ketoacyl_synth_N"/>
</dbReference>
<dbReference type="InterPro" id="IPR020841">
    <property type="entry name" value="PKS_Beta-ketoAc_synthase_dom"/>
</dbReference>
<dbReference type="InterPro" id="IPR016039">
    <property type="entry name" value="Thiolase-like"/>
</dbReference>
<dbReference type="NCBIfam" id="NF005589">
    <property type="entry name" value="PRK07314.1"/>
    <property type="match status" value="1"/>
</dbReference>
<dbReference type="NCBIfam" id="NF005916">
    <property type="entry name" value="PRK07910.1"/>
    <property type="match status" value="1"/>
</dbReference>
<dbReference type="PANTHER" id="PTHR11712:SF336">
    <property type="entry name" value="3-OXOACYL-[ACYL-CARRIER-PROTEIN] SYNTHASE, MITOCHONDRIAL"/>
    <property type="match status" value="1"/>
</dbReference>
<dbReference type="PANTHER" id="PTHR11712">
    <property type="entry name" value="POLYKETIDE SYNTHASE-RELATED"/>
    <property type="match status" value="1"/>
</dbReference>
<dbReference type="Pfam" id="PF00109">
    <property type="entry name" value="ketoacyl-synt"/>
    <property type="match status" value="1"/>
</dbReference>
<dbReference type="Pfam" id="PF02801">
    <property type="entry name" value="Ketoacyl-synt_C"/>
    <property type="match status" value="1"/>
</dbReference>
<dbReference type="SMART" id="SM00825">
    <property type="entry name" value="PKS_KS"/>
    <property type="match status" value="1"/>
</dbReference>
<dbReference type="SUPFAM" id="SSF53901">
    <property type="entry name" value="Thiolase-like"/>
    <property type="match status" value="2"/>
</dbReference>
<dbReference type="PROSITE" id="PS52004">
    <property type="entry name" value="KS3_2"/>
    <property type="match status" value="1"/>
</dbReference>
<feature type="chain" id="PRO_0000180331" description="3-oxoacyl-[acyl-carrier-protein] synthase 1">
    <location>
        <begin position="1"/>
        <end position="416"/>
    </location>
</feature>
<feature type="domain" description="Ketosynthase family 3 (KS3)" evidence="2">
    <location>
        <begin position="11"/>
        <end position="415"/>
    </location>
</feature>
<feature type="active site" description="For beta-ketoacyl synthase activity" evidence="2">
    <location>
        <position position="171"/>
    </location>
</feature>
<feature type="active site" description="For beta-ketoacyl synthase activity" evidence="2">
    <location>
        <position position="311"/>
    </location>
</feature>
<feature type="active site" description="For beta-ketoacyl synthase activity" evidence="2">
    <location>
        <position position="345"/>
    </location>
</feature>
<feature type="binding site" evidence="1">
    <location>
        <position position="311"/>
    </location>
    <ligand>
        <name>substrate</name>
    </ligand>
</feature>
<feature type="binding site" evidence="1">
    <location>
        <position position="345"/>
    </location>
    <ligand>
        <name>substrate</name>
    </ligand>
</feature>
<reference key="1">
    <citation type="journal article" date="2001" name="Nature">
        <title>Massive gene decay in the leprosy bacillus.</title>
        <authorList>
            <person name="Cole S.T."/>
            <person name="Eiglmeier K."/>
            <person name="Parkhill J."/>
            <person name="James K.D."/>
            <person name="Thomson N.R."/>
            <person name="Wheeler P.R."/>
            <person name="Honore N."/>
            <person name="Garnier T."/>
            <person name="Churcher C.M."/>
            <person name="Harris D.E."/>
            <person name="Mungall K.L."/>
            <person name="Basham D."/>
            <person name="Brown D."/>
            <person name="Chillingworth T."/>
            <person name="Connor R."/>
            <person name="Davies R.M."/>
            <person name="Devlin K."/>
            <person name="Duthoy S."/>
            <person name="Feltwell T."/>
            <person name="Fraser A."/>
            <person name="Hamlin N."/>
            <person name="Holroyd S."/>
            <person name="Hornsby T."/>
            <person name="Jagels K."/>
            <person name="Lacroix C."/>
            <person name="Maclean J."/>
            <person name="Moule S."/>
            <person name="Murphy L.D."/>
            <person name="Oliver K."/>
            <person name="Quail M.A."/>
            <person name="Rajandream M.A."/>
            <person name="Rutherford K.M."/>
            <person name="Rutter S."/>
            <person name="Seeger K."/>
            <person name="Simon S."/>
            <person name="Simmonds M."/>
            <person name="Skelton J."/>
            <person name="Squares R."/>
            <person name="Squares S."/>
            <person name="Stevens K."/>
            <person name="Taylor K."/>
            <person name="Whitehead S."/>
            <person name="Woodward J.R."/>
            <person name="Barrell B.G."/>
        </authorList>
    </citation>
    <scope>NUCLEOTIDE SEQUENCE [LARGE SCALE GENOMIC DNA]</scope>
    <source>
        <strain>TN</strain>
    </source>
</reference>
<proteinExistence type="inferred from homology"/>
<sequence length="416" mass="43470">MTMPSTANGGFPSVVVTAVTATTSISPDIESTWKGLLAGESGIHVLEDEYITKWDLPVKIGGHLKEPVDSHMSRLDLRRMSYVQRMSKLLSGRLWESTGSPEVDPDRFTVVVGTGLGGAERIVESYDLMNAGGPRKVSPLAVQMIMPNGAAATVGLQLGACAGVMTPVSACSSGSEAIAHAWRQIIMGDADVAVCGGVEGPIEALPIAAFSMMRAMSTRNDDPEGASRPFDKNRDGFVFGEAGALMLIETEEHAKARGAKPLARLLGAGITSDAFHMVAPAADGVRAGRAMTRSLELAGLSAKDVDHVNAHGTATPIGDSAEANAIRVAGCEQAAVYAPKSALGHSIGAVGALESVLTVLALRDGVIPPTLNYQTPDPEIDLDIVAGEPRYGDYRYAINNSFGFGGHNVALAFGRY</sequence>
<name>KASA_MYCLE</name>
<keyword id="KW-0012">Acyltransferase</keyword>
<keyword id="KW-0963">Cytoplasm</keyword>
<keyword id="KW-0275">Fatty acid biosynthesis</keyword>
<keyword id="KW-0276">Fatty acid metabolism</keyword>
<keyword id="KW-0444">Lipid biosynthesis</keyword>
<keyword id="KW-0443">Lipid metabolism</keyword>
<keyword id="KW-1185">Reference proteome</keyword>
<keyword id="KW-0808">Transferase</keyword>
<gene>
    <name type="primary">kasA</name>
    <name type="ordered locus">ML1655</name>
    <name type="ORF">MLCB1243.20c</name>
</gene>